<gene>
    <name evidence="1" type="primary">rpsI</name>
    <name type="ordered locus">Psyr_4119</name>
</gene>
<name>RS9_PSEU2</name>
<organism>
    <name type="scientific">Pseudomonas syringae pv. syringae (strain B728a)</name>
    <dbReference type="NCBI Taxonomy" id="205918"/>
    <lineage>
        <taxon>Bacteria</taxon>
        <taxon>Pseudomonadati</taxon>
        <taxon>Pseudomonadota</taxon>
        <taxon>Gammaproteobacteria</taxon>
        <taxon>Pseudomonadales</taxon>
        <taxon>Pseudomonadaceae</taxon>
        <taxon>Pseudomonas</taxon>
        <taxon>Pseudomonas syringae</taxon>
    </lineage>
</organism>
<proteinExistence type="inferred from homology"/>
<accession>Q4ZNX3</accession>
<reference key="1">
    <citation type="journal article" date="2005" name="Proc. Natl. Acad. Sci. U.S.A.">
        <title>Comparison of the complete genome sequences of Pseudomonas syringae pv. syringae B728a and pv. tomato DC3000.</title>
        <authorList>
            <person name="Feil H."/>
            <person name="Feil W.S."/>
            <person name="Chain P."/>
            <person name="Larimer F."/>
            <person name="Dibartolo G."/>
            <person name="Copeland A."/>
            <person name="Lykidis A."/>
            <person name="Trong S."/>
            <person name="Nolan M."/>
            <person name="Goltsman E."/>
            <person name="Thiel J."/>
            <person name="Malfatti S."/>
            <person name="Loper J.E."/>
            <person name="Lapidus A."/>
            <person name="Detter J.C."/>
            <person name="Land M."/>
            <person name="Richardson P.M."/>
            <person name="Kyrpides N.C."/>
            <person name="Ivanova N."/>
            <person name="Lindow S.E."/>
        </authorList>
    </citation>
    <scope>NUCLEOTIDE SEQUENCE [LARGE SCALE GENOMIC DNA]</scope>
    <source>
        <strain>B728a</strain>
    </source>
</reference>
<protein>
    <recommendedName>
        <fullName evidence="1">Small ribosomal subunit protein uS9</fullName>
    </recommendedName>
    <alternativeName>
        <fullName evidence="2">30S ribosomal protein S9</fullName>
    </alternativeName>
</protein>
<comment type="similarity">
    <text evidence="1">Belongs to the universal ribosomal protein uS9 family.</text>
</comment>
<keyword id="KW-0687">Ribonucleoprotein</keyword>
<keyword id="KW-0689">Ribosomal protein</keyword>
<sequence length="130" mass="14602">MSATQNYGTGRRKTATARVFLRPGTGNISINNRSLDNFFGRETARMVVRQPLELTETVEKFDIYVTVIGGGVSGQAGAIRHGITRALMQYDETLRGALRKAGFVTRDAREVERKKVGLRKARKRPQYSKR</sequence>
<feature type="chain" id="PRO_1000051298" description="Small ribosomal subunit protein uS9">
    <location>
        <begin position="1"/>
        <end position="130"/>
    </location>
</feature>
<evidence type="ECO:0000255" key="1">
    <source>
        <dbReference type="HAMAP-Rule" id="MF_00532"/>
    </source>
</evidence>
<evidence type="ECO:0000305" key="2"/>
<dbReference type="EMBL" id="CP000075">
    <property type="protein sequence ID" value="AAY39149.1"/>
    <property type="molecule type" value="Genomic_DNA"/>
</dbReference>
<dbReference type="RefSeq" id="WP_002555064.1">
    <property type="nucleotide sequence ID" value="NC_007005.1"/>
</dbReference>
<dbReference type="RefSeq" id="YP_237187.1">
    <property type="nucleotide sequence ID" value="NC_007005.1"/>
</dbReference>
<dbReference type="SMR" id="Q4ZNX3"/>
<dbReference type="STRING" id="205918.Psyr_4119"/>
<dbReference type="GeneID" id="96220599"/>
<dbReference type="KEGG" id="psb:Psyr_4119"/>
<dbReference type="PATRIC" id="fig|205918.7.peg.4237"/>
<dbReference type="eggNOG" id="COG0103">
    <property type="taxonomic scope" value="Bacteria"/>
</dbReference>
<dbReference type="HOGENOM" id="CLU_046483_2_1_6"/>
<dbReference type="OrthoDB" id="9803965at2"/>
<dbReference type="Proteomes" id="UP000000426">
    <property type="component" value="Chromosome"/>
</dbReference>
<dbReference type="GO" id="GO:0022627">
    <property type="term" value="C:cytosolic small ribosomal subunit"/>
    <property type="evidence" value="ECO:0007669"/>
    <property type="project" value="TreeGrafter"/>
</dbReference>
<dbReference type="GO" id="GO:0003723">
    <property type="term" value="F:RNA binding"/>
    <property type="evidence" value="ECO:0007669"/>
    <property type="project" value="TreeGrafter"/>
</dbReference>
<dbReference type="GO" id="GO:0003735">
    <property type="term" value="F:structural constituent of ribosome"/>
    <property type="evidence" value="ECO:0007669"/>
    <property type="project" value="InterPro"/>
</dbReference>
<dbReference type="GO" id="GO:0006412">
    <property type="term" value="P:translation"/>
    <property type="evidence" value="ECO:0007669"/>
    <property type="project" value="UniProtKB-UniRule"/>
</dbReference>
<dbReference type="FunFam" id="3.30.230.10:FF:000001">
    <property type="entry name" value="30S ribosomal protein S9"/>
    <property type="match status" value="1"/>
</dbReference>
<dbReference type="Gene3D" id="3.30.230.10">
    <property type="match status" value="1"/>
</dbReference>
<dbReference type="HAMAP" id="MF_00532_B">
    <property type="entry name" value="Ribosomal_uS9_B"/>
    <property type="match status" value="1"/>
</dbReference>
<dbReference type="InterPro" id="IPR020568">
    <property type="entry name" value="Ribosomal_Su5_D2-typ_SF"/>
</dbReference>
<dbReference type="InterPro" id="IPR000754">
    <property type="entry name" value="Ribosomal_uS9"/>
</dbReference>
<dbReference type="InterPro" id="IPR023035">
    <property type="entry name" value="Ribosomal_uS9_bac/plastid"/>
</dbReference>
<dbReference type="InterPro" id="IPR020574">
    <property type="entry name" value="Ribosomal_uS9_CS"/>
</dbReference>
<dbReference type="InterPro" id="IPR014721">
    <property type="entry name" value="Ribsml_uS5_D2-typ_fold_subgr"/>
</dbReference>
<dbReference type="NCBIfam" id="NF001099">
    <property type="entry name" value="PRK00132.1"/>
    <property type="match status" value="1"/>
</dbReference>
<dbReference type="PANTHER" id="PTHR21569">
    <property type="entry name" value="RIBOSOMAL PROTEIN S9"/>
    <property type="match status" value="1"/>
</dbReference>
<dbReference type="PANTHER" id="PTHR21569:SF1">
    <property type="entry name" value="SMALL RIBOSOMAL SUBUNIT PROTEIN US9M"/>
    <property type="match status" value="1"/>
</dbReference>
<dbReference type="Pfam" id="PF00380">
    <property type="entry name" value="Ribosomal_S9"/>
    <property type="match status" value="1"/>
</dbReference>
<dbReference type="SUPFAM" id="SSF54211">
    <property type="entry name" value="Ribosomal protein S5 domain 2-like"/>
    <property type="match status" value="1"/>
</dbReference>
<dbReference type="PROSITE" id="PS00360">
    <property type="entry name" value="RIBOSOMAL_S9"/>
    <property type="match status" value="1"/>
</dbReference>